<sequence>MSTSSVRFAFRRFWQSETGPKTVHFWAPTLKWGLVFAGFSDMKRPVEKISGAQNLSLLSTALIWTRWSFVIKPRNILLASVNSFLCLTAGYQLGRIANYRIRNGDSISQLCSYILSGADESKKEITTGR</sequence>
<gene>
    <name evidence="7 8" type="primary">MPC2</name>
    <name evidence="10" type="ordered locus">YHR162W</name>
</gene>
<proteinExistence type="evidence at protein level"/>
<evidence type="ECO:0000250" key="1">
    <source>
        <dbReference type="UniProtKB" id="O95563"/>
    </source>
</evidence>
<evidence type="ECO:0000255" key="2"/>
<evidence type="ECO:0000269" key="3">
    <source>
    </source>
</evidence>
<evidence type="ECO:0000269" key="4">
    <source>
    </source>
</evidence>
<evidence type="ECO:0000269" key="5">
    <source>
    </source>
</evidence>
<evidence type="ECO:0000269" key="6">
    <source>
    </source>
</evidence>
<evidence type="ECO:0000303" key="7">
    <source>
    </source>
</evidence>
<evidence type="ECO:0000303" key="8">
    <source>
    </source>
</evidence>
<evidence type="ECO:0000305" key="9"/>
<evidence type="ECO:0000312" key="10">
    <source>
        <dbReference type="SGD" id="S000001205"/>
    </source>
</evidence>
<feature type="chain" id="PRO_0000212801" description="Mitochondrial pyruvate carrier 2">
    <location>
        <begin position="1"/>
        <end position="129"/>
    </location>
</feature>
<feature type="topological domain" description="Mitochondrial matrix" evidence="1">
    <location>
        <begin position="2"/>
        <end position="22"/>
    </location>
</feature>
<feature type="transmembrane region" description="Helical" evidence="9">
    <location>
        <begin position="23"/>
        <end position="39"/>
    </location>
</feature>
<feature type="topological domain" description="Mitochondrial intermembrane" evidence="1">
    <location>
        <begin position="40"/>
        <end position="54"/>
    </location>
</feature>
<feature type="transmembrane region" description="Helical" evidence="2">
    <location>
        <begin position="55"/>
        <end position="71"/>
    </location>
</feature>
<feature type="topological domain" description="Mitochondrial matrix" evidence="1">
    <location>
        <begin position="72"/>
        <end position="74"/>
    </location>
</feature>
<feature type="transmembrane region" description="Helical" evidence="2">
    <location>
        <begin position="75"/>
        <end position="91"/>
    </location>
</feature>
<feature type="topological domain" description="Mitochondrial intermembrane" evidence="1">
    <location>
        <begin position="92"/>
        <end position="129"/>
    </location>
</feature>
<protein>
    <recommendedName>
        <fullName evidence="7 8">Mitochondrial pyruvate carrier 2</fullName>
        <shortName evidence="7 8">MPC2</shortName>
    </recommendedName>
</protein>
<accession>P38857</accession>
<accession>D3DLB1</accession>
<comment type="function">
    <text evidence="5 6">Mediates the uptake of pyruvate into mitochondria.</text>
</comment>
<comment type="catalytic activity">
    <reaction evidence="5 6">
        <text>pyruvate(out) + H(+)(out) = pyruvate(in) + H(+)(in)</text>
        <dbReference type="Rhea" id="RHEA:64720"/>
        <dbReference type="ChEBI" id="CHEBI:15361"/>
        <dbReference type="ChEBI" id="CHEBI:15378"/>
    </reaction>
</comment>
<comment type="subunit">
    <text evidence="5 6">The functional 150 kDa pyruvate import complex is a heteromer of MPC1 and either MPC2 or MPC3.</text>
</comment>
<comment type="interaction">
    <interactant intactId="EBI-24818">
        <id>P38857</id>
    </interactant>
    <interactant intactId="EBI-23845">
        <id>P53157</id>
        <label>MPC1</label>
    </interactant>
    <organismsDiffer>false</organismsDiffer>
    <experiments>9</experiments>
</comment>
<comment type="subcellular location">
    <subcellularLocation>
        <location evidence="3">Mitochondrion</location>
    </subcellularLocation>
    <subcellularLocation>
        <location evidence="6">Mitochondrion inner membrane</location>
        <topology evidence="2">Multi-pass membrane protein</topology>
    </subcellularLocation>
</comment>
<comment type="induction">
    <text evidence="5">Mainly expressed when grown on glucose containing growth medium.</text>
</comment>
<comment type="disruption phenotype">
    <text evidence="5">Grows more slowly in amino acid-free medium (SD), when combined with disruption of MPC3.</text>
</comment>
<comment type="miscellaneous">
    <text evidence="4">Present with 3410 molecules/cell in log phase SD medium.</text>
</comment>
<comment type="similarity">
    <text evidence="9">Belongs to the mitochondrial pyruvate carrier (MPC) (TC 2.A.105) family.</text>
</comment>
<keyword id="KW-0472">Membrane</keyword>
<keyword id="KW-0496">Mitochondrion</keyword>
<keyword id="KW-0999">Mitochondrion inner membrane</keyword>
<keyword id="KW-1185">Reference proteome</keyword>
<keyword id="KW-0812">Transmembrane</keyword>
<keyword id="KW-1133">Transmembrane helix</keyword>
<keyword id="KW-0813">Transport</keyword>
<dbReference type="EMBL" id="U00027">
    <property type="protein sequence ID" value="AAB68009.1"/>
    <property type="molecule type" value="Genomic_DNA"/>
</dbReference>
<dbReference type="EMBL" id="AY558303">
    <property type="protein sequence ID" value="AAS56629.1"/>
    <property type="molecule type" value="Genomic_DNA"/>
</dbReference>
<dbReference type="EMBL" id="BK006934">
    <property type="protein sequence ID" value="DAA06855.1"/>
    <property type="molecule type" value="Genomic_DNA"/>
</dbReference>
<dbReference type="PIR" id="S48902">
    <property type="entry name" value="S48902"/>
</dbReference>
<dbReference type="RefSeq" id="NP_012032.1">
    <property type="nucleotide sequence ID" value="NM_001179293.1"/>
</dbReference>
<dbReference type="SMR" id="P38857"/>
<dbReference type="BioGRID" id="36596">
    <property type="interactions" value="90"/>
</dbReference>
<dbReference type="ComplexPortal" id="CPX-302">
    <property type="entry name" value="Mitochondrial pyruvate carrier, fermentative isoform"/>
</dbReference>
<dbReference type="DIP" id="DIP-8092N"/>
<dbReference type="FunCoup" id="P38857">
    <property type="interactions" value="307"/>
</dbReference>
<dbReference type="IntAct" id="P38857">
    <property type="interactions" value="8"/>
</dbReference>
<dbReference type="STRING" id="4932.YHR162W"/>
<dbReference type="TCDB" id="2.A.105.1.1">
    <property type="family name" value="the mitochondrial pyruvate carrier (mpc) family"/>
</dbReference>
<dbReference type="PaxDb" id="4932-YHR162W"/>
<dbReference type="PeptideAtlas" id="P38857"/>
<dbReference type="EnsemblFungi" id="YHR162W_mRNA">
    <property type="protein sequence ID" value="YHR162W"/>
    <property type="gene ID" value="YHR162W"/>
</dbReference>
<dbReference type="GeneID" id="856567"/>
<dbReference type="KEGG" id="sce:YHR162W"/>
<dbReference type="AGR" id="SGD:S000001205"/>
<dbReference type="SGD" id="S000001205">
    <property type="gene designation" value="MPC2"/>
</dbReference>
<dbReference type="VEuPathDB" id="FungiDB:YHR162W"/>
<dbReference type="eggNOG" id="KOG1589">
    <property type="taxonomic scope" value="Eukaryota"/>
</dbReference>
<dbReference type="GeneTree" id="ENSGT00510000047120"/>
<dbReference type="HOGENOM" id="CLU_099502_1_0_1"/>
<dbReference type="InParanoid" id="P38857"/>
<dbReference type="OMA" id="FWAPIVK"/>
<dbReference type="OrthoDB" id="869189at2759"/>
<dbReference type="BioCyc" id="YEAST:G3O-31197-MONOMER"/>
<dbReference type="BioGRID-ORCS" id="856567">
    <property type="hits" value="0 hits in 10 CRISPR screens"/>
</dbReference>
<dbReference type="PRO" id="PR:P38857"/>
<dbReference type="Proteomes" id="UP000002311">
    <property type="component" value="Chromosome VIII"/>
</dbReference>
<dbReference type="RNAct" id="P38857">
    <property type="molecule type" value="protein"/>
</dbReference>
<dbReference type="GO" id="GO:0098800">
    <property type="term" value="C:inner mitochondrial membrane protein complex"/>
    <property type="evidence" value="ECO:0000314"/>
    <property type="project" value="ComplexPortal"/>
</dbReference>
<dbReference type="GO" id="GO:0005743">
    <property type="term" value="C:mitochondrial inner membrane"/>
    <property type="evidence" value="ECO:0000314"/>
    <property type="project" value="SGD"/>
</dbReference>
<dbReference type="GO" id="GO:0005739">
    <property type="term" value="C:mitochondrion"/>
    <property type="evidence" value="ECO:0007005"/>
    <property type="project" value="SGD"/>
</dbReference>
<dbReference type="GO" id="GO:0050833">
    <property type="term" value="F:pyruvate transmembrane transporter activity"/>
    <property type="evidence" value="ECO:0000314"/>
    <property type="project" value="SGD"/>
</dbReference>
<dbReference type="GO" id="GO:0006850">
    <property type="term" value="P:mitochondrial pyruvate transmembrane transport"/>
    <property type="evidence" value="ECO:0000314"/>
    <property type="project" value="ComplexPortal"/>
</dbReference>
<dbReference type="InterPro" id="IPR005336">
    <property type="entry name" value="MPC"/>
</dbReference>
<dbReference type="PANTHER" id="PTHR14154">
    <property type="entry name" value="UPF0041 BRAIN PROTEIN 44-RELATED"/>
    <property type="match status" value="1"/>
</dbReference>
<dbReference type="Pfam" id="PF03650">
    <property type="entry name" value="MPC"/>
    <property type="match status" value="1"/>
</dbReference>
<reference key="1">
    <citation type="journal article" date="1994" name="Science">
        <title>Complete nucleotide sequence of Saccharomyces cerevisiae chromosome VIII.</title>
        <authorList>
            <person name="Johnston M."/>
            <person name="Andrews S."/>
            <person name="Brinkman R."/>
            <person name="Cooper J."/>
            <person name="Ding H."/>
            <person name="Dover J."/>
            <person name="Du Z."/>
            <person name="Favello A."/>
            <person name="Fulton L."/>
            <person name="Gattung S."/>
            <person name="Geisel C."/>
            <person name="Kirsten J."/>
            <person name="Kucaba T."/>
            <person name="Hillier L.W."/>
            <person name="Jier M."/>
            <person name="Johnston L."/>
            <person name="Langston Y."/>
            <person name="Latreille P."/>
            <person name="Louis E.J."/>
            <person name="Macri C."/>
            <person name="Mardis E."/>
            <person name="Menezes S."/>
            <person name="Mouser L."/>
            <person name="Nhan M."/>
            <person name="Rifkin L."/>
            <person name="Riles L."/>
            <person name="St Peter H."/>
            <person name="Trevaskis E."/>
            <person name="Vaughan K."/>
            <person name="Vignati D."/>
            <person name="Wilcox L."/>
            <person name="Wohldman P."/>
            <person name="Waterston R."/>
            <person name="Wilson R."/>
            <person name="Vaudin M."/>
        </authorList>
    </citation>
    <scope>NUCLEOTIDE SEQUENCE [LARGE SCALE GENOMIC DNA]</scope>
    <source>
        <strain>ATCC 204508 / S288c</strain>
    </source>
</reference>
<reference key="2">
    <citation type="journal article" date="2014" name="G3 (Bethesda)">
        <title>The reference genome sequence of Saccharomyces cerevisiae: Then and now.</title>
        <authorList>
            <person name="Engel S.R."/>
            <person name="Dietrich F.S."/>
            <person name="Fisk D.G."/>
            <person name="Binkley G."/>
            <person name="Balakrishnan R."/>
            <person name="Costanzo M.C."/>
            <person name="Dwight S.S."/>
            <person name="Hitz B.C."/>
            <person name="Karra K."/>
            <person name="Nash R.S."/>
            <person name="Weng S."/>
            <person name="Wong E.D."/>
            <person name="Lloyd P."/>
            <person name="Skrzypek M.S."/>
            <person name="Miyasato S.R."/>
            <person name="Simison M."/>
            <person name="Cherry J.M."/>
        </authorList>
    </citation>
    <scope>GENOME REANNOTATION</scope>
    <source>
        <strain>ATCC 204508 / S288c</strain>
    </source>
</reference>
<reference key="3">
    <citation type="journal article" date="2007" name="Genome Res.">
        <title>Approaching a complete repository of sequence-verified protein-encoding clones for Saccharomyces cerevisiae.</title>
        <authorList>
            <person name="Hu Y."/>
            <person name="Rolfs A."/>
            <person name="Bhullar B."/>
            <person name="Murthy T.V.S."/>
            <person name="Zhu C."/>
            <person name="Berger M.F."/>
            <person name="Camargo A.A."/>
            <person name="Kelley F."/>
            <person name="McCarron S."/>
            <person name="Jepson D."/>
            <person name="Richardson A."/>
            <person name="Raphael J."/>
            <person name="Moreira D."/>
            <person name="Taycher E."/>
            <person name="Zuo D."/>
            <person name="Mohr S."/>
            <person name="Kane M.F."/>
            <person name="Williamson J."/>
            <person name="Simpson A.J.G."/>
            <person name="Bulyk M.L."/>
            <person name="Harlow E."/>
            <person name="Marsischky G."/>
            <person name="Kolodner R.D."/>
            <person name="LaBaer J."/>
        </authorList>
    </citation>
    <scope>NUCLEOTIDE SEQUENCE [GENOMIC DNA]</scope>
    <source>
        <strain>ATCC 204508 / S288c</strain>
    </source>
</reference>
<reference key="4">
    <citation type="journal article" date="2003" name="Nature">
        <title>Global analysis of protein localization in budding yeast.</title>
        <authorList>
            <person name="Huh W.-K."/>
            <person name="Falvo J.V."/>
            <person name="Gerke L.C."/>
            <person name="Carroll A.S."/>
            <person name="Howson R.W."/>
            <person name="Weissman J.S."/>
            <person name="O'Shea E.K."/>
        </authorList>
    </citation>
    <scope>SUBCELLULAR LOCATION [LARGE SCALE ANALYSIS]</scope>
</reference>
<reference key="5">
    <citation type="journal article" date="2003" name="Nature">
        <title>Global analysis of protein expression in yeast.</title>
        <authorList>
            <person name="Ghaemmaghami S."/>
            <person name="Huh W.-K."/>
            <person name="Bower K."/>
            <person name="Howson R.W."/>
            <person name="Belle A."/>
            <person name="Dephoure N."/>
            <person name="O'Shea E.K."/>
            <person name="Weissman J.S."/>
        </authorList>
    </citation>
    <scope>LEVEL OF PROTEIN EXPRESSION [LARGE SCALE ANALYSIS]</scope>
</reference>
<reference key="6">
    <citation type="journal article" date="2012" name="Science">
        <title>Identification and functional expression of the mitochondrial pyruvate carrier.</title>
        <authorList>
            <person name="Herzig S."/>
            <person name="Raemy E."/>
            <person name="Montessuit S."/>
            <person name="Veuthey J.L."/>
            <person name="Zamboni N."/>
            <person name="Westermann B."/>
            <person name="Kunji E.R."/>
            <person name="Martinou J.C."/>
        </authorList>
    </citation>
    <scope>FUNCTION</scope>
    <scope>SUBUNIT</scope>
    <scope>DISRUPTION PHENOTYPE</scope>
    <scope>INDUCTION</scope>
    <scope>TRANSPORTER ACTIVITY</scope>
</reference>
<reference key="7">
    <citation type="journal article" date="2012" name="Science">
        <title>A mitochondrial pyruvate carrier required for pyruvate uptake in yeast, Drosophila, and humans.</title>
        <authorList>
            <person name="Bricker D.K."/>
            <person name="Taylor E.B."/>
            <person name="Schell J.C."/>
            <person name="Orsak T."/>
            <person name="Boutron A."/>
            <person name="Chen Y.C."/>
            <person name="Cox J.E."/>
            <person name="Cardon C.M."/>
            <person name="Van Vranken J.G."/>
            <person name="Dephoure N."/>
            <person name="Redin C."/>
            <person name="Boudina S."/>
            <person name="Gygi S.P."/>
            <person name="Brivet M."/>
            <person name="Thummel C.S."/>
            <person name="Rutter J."/>
        </authorList>
    </citation>
    <scope>FUNCTION</scope>
    <scope>SUBCELLULAR LOCATION</scope>
    <scope>SUBUNIT</scope>
    <scope>TRANSPORTER ACTIVITY</scope>
</reference>
<organism>
    <name type="scientific">Saccharomyces cerevisiae (strain ATCC 204508 / S288c)</name>
    <name type="common">Baker's yeast</name>
    <dbReference type="NCBI Taxonomy" id="559292"/>
    <lineage>
        <taxon>Eukaryota</taxon>
        <taxon>Fungi</taxon>
        <taxon>Dikarya</taxon>
        <taxon>Ascomycota</taxon>
        <taxon>Saccharomycotina</taxon>
        <taxon>Saccharomycetes</taxon>
        <taxon>Saccharomycetales</taxon>
        <taxon>Saccharomycetaceae</taxon>
        <taxon>Saccharomyces</taxon>
    </lineage>
</organism>
<name>MPC2_YEAST</name>